<keyword id="KW-0963">Cytoplasm</keyword>
<keyword id="KW-0238">DNA-binding</keyword>
<keyword id="KW-1185">Reference proteome</keyword>
<gene>
    <name type="ordered locus">HNE_0371</name>
</gene>
<proteinExistence type="inferred from homology"/>
<accession>Q0C592</accession>
<protein>
    <recommendedName>
        <fullName evidence="1">Nucleoid-associated protein HNE_0371</fullName>
    </recommendedName>
</protein>
<sequence length="107" mass="11517">MKDLAQIMQQAQAMQAKMAEVQQKIENTEADGVAGAGLVRVKLRGKGELISVTIDKSLMGDDPEIVEDLIKAAHSDARKRLDQAMEDAMKTATAGFGGMLPGFKLPF</sequence>
<reference key="1">
    <citation type="journal article" date="2006" name="J. Bacteriol.">
        <title>Comparative genomic evidence for a close relationship between the dimorphic prosthecate bacteria Hyphomonas neptunium and Caulobacter crescentus.</title>
        <authorList>
            <person name="Badger J.H."/>
            <person name="Hoover T.R."/>
            <person name="Brun Y.V."/>
            <person name="Weiner R.M."/>
            <person name="Laub M.T."/>
            <person name="Alexandre G."/>
            <person name="Mrazek J."/>
            <person name="Ren Q."/>
            <person name="Paulsen I.T."/>
            <person name="Nelson K.E."/>
            <person name="Khouri H.M."/>
            <person name="Radune D."/>
            <person name="Sosa J."/>
            <person name="Dodson R.J."/>
            <person name="Sullivan S.A."/>
            <person name="Rosovitz M.J."/>
            <person name="Madupu R."/>
            <person name="Brinkac L.M."/>
            <person name="Durkin A.S."/>
            <person name="Daugherty S.C."/>
            <person name="Kothari S.P."/>
            <person name="Giglio M.G."/>
            <person name="Zhou L."/>
            <person name="Haft D.H."/>
            <person name="Selengut J.D."/>
            <person name="Davidsen T.M."/>
            <person name="Yang Q."/>
            <person name="Zafar N."/>
            <person name="Ward N.L."/>
        </authorList>
    </citation>
    <scope>NUCLEOTIDE SEQUENCE [LARGE SCALE GENOMIC DNA]</scope>
    <source>
        <strain>ATCC 15444</strain>
    </source>
</reference>
<organism>
    <name type="scientific">Hyphomonas neptunium (strain ATCC 15444)</name>
    <dbReference type="NCBI Taxonomy" id="228405"/>
    <lineage>
        <taxon>Bacteria</taxon>
        <taxon>Pseudomonadati</taxon>
        <taxon>Pseudomonadota</taxon>
        <taxon>Alphaproteobacteria</taxon>
        <taxon>Hyphomonadales</taxon>
        <taxon>Hyphomonadaceae</taxon>
        <taxon>Hyphomonas</taxon>
    </lineage>
</organism>
<dbReference type="EMBL" id="CP000158">
    <property type="protein sequence ID" value="ABI75964.1"/>
    <property type="molecule type" value="Genomic_DNA"/>
</dbReference>
<dbReference type="RefSeq" id="WP_011645401.1">
    <property type="nucleotide sequence ID" value="NC_008358.1"/>
</dbReference>
<dbReference type="SMR" id="Q0C592"/>
<dbReference type="STRING" id="228405.HNE_0371"/>
<dbReference type="KEGG" id="hne:HNE_0371"/>
<dbReference type="eggNOG" id="COG0718">
    <property type="taxonomic scope" value="Bacteria"/>
</dbReference>
<dbReference type="HOGENOM" id="CLU_140930_0_1_5"/>
<dbReference type="Proteomes" id="UP000001959">
    <property type="component" value="Chromosome"/>
</dbReference>
<dbReference type="GO" id="GO:0043590">
    <property type="term" value="C:bacterial nucleoid"/>
    <property type="evidence" value="ECO:0007669"/>
    <property type="project" value="UniProtKB-UniRule"/>
</dbReference>
<dbReference type="GO" id="GO:0005829">
    <property type="term" value="C:cytosol"/>
    <property type="evidence" value="ECO:0007669"/>
    <property type="project" value="TreeGrafter"/>
</dbReference>
<dbReference type="GO" id="GO:0003677">
    <property type="term" value="F:DNA binding"/>
    <property type="evidence" value="ECO:0007669"/>
    <property type="project" value="UniProtKB-UniRule"/>
</dbReference>
<dbReference type="Gene3D" id="3.30.1310.10">
    <property type="entry name" value="Nucleoid-associated protein YbaB-like domain"/>
    <property type="match status" value="1"/>
</dbReference>
<dbReference type="HAMAP" id="MF_00274">
    <property type="entry name" value="DNA_YbaB_EbfC"/>
    <property type="match status" value="1"/>
</dbReference>
<dbReference type="InterPro" id="IPR036894">
    <property type="entry name" value="YbaB-like_sf"/>
</dbReference>
<dbReference type="InterPro" id="IPR004401">
    <property type="entry name" value="YbaB/EbfC"/>
</dbReference>
<dbReference type="NCBIfam" id="TIGR00103">
    <property type="entry name" value="DNA_YbaB_EbfC"/>
    <property type="match status" value="1"/>
</dbReference>
<dbReference type="PANTHER" id="PTHR33449">
    <property type="entry name" value="NUCLEOID-ASSOCIATED PROTEIN YBAB"/>
    <property type="match status" value="1"/>
</dbReference>
<dbReference type="PANTHER" id="PTHR33449:SF1">
    <property type="entry name" value="NUCLEOID-ASSOCIATED PROTEIN YBAB"/>
    <property type="match status" value="1"/>
</dbReference>
<dbReference type="Pfam" id="PF02575">
    <property type="entry name" value="YbaB_DNA_bd"/>
    <property type="match status" value="1"/>
</dbReference>
<dbReference type="PIRSF" id="PIRSF004555">
    <property type="entry name" value="UCP004555"/>
    <property type="match status" value="1"/>
</dbReference>
<dbReference type="SUPFAM" id="SSF82607">
    <property type="entry name" value="YbaB-like"/>
    <property type="match status" value="1"/>
</dbReference>
<name>Y371_HYPNA</name>
<evidence type="ECO:0000255" key="1">
    <source>
        <dbReference type="HAMAP-Rule" id="MF_00274"/>
    </source>
</evidence>
<comment type="function">
    <text evidence="1">Binds to DNA and alters its conformation. May be involved in regulation of gene expression, nucleoid organization and DNA protection.</text>
</comment>
<comment type="subunit">
    <text evidence="1">Homodimer.</text>
</comment>
<comment type="subcellular location">
    <subcellularLocation>
        <location evidence="1">Cytoplasm</location>
        <location evidence="1">Nucleoid</location>
    </subcellularLocation>
</comment>
<comment type="similarity">
    <text evidence="1">Belongs to the YbaB/EbfC family.</text>
</comment>
<feature type="chain" id="PRO_1000003755" description="Nucleoid-associated protein HNE_0371">
    <location>
        <begin position="1"/>
        <end position="107"/>
    </location>
</feature>